<accession>Q9CEW7</accession>
<gene>
    <name evidence="1" type="primary">pstB2</name>
    <name type="synonym">pstB</name>
    <name type="ordered locus">LL1717</name>
    <name type="ORF">L155408</name>
</gene>
<name>PSTB2_LACLA</name>
<keyword id="KW-0067">ATP-binding</keyword>
<keyword id="KW-1003">Cell membrane</keyword>
<keyword id="KW-0472">Membrane</keyword>
<keyword id="KW-0547">Nucleotide-binding</keyword>
<keyword id="KW-0592">Phosphate transport</keyword>
<keyword id="KW-1185">Reference proteome</keyword>
<keyword id="KW-1278">Translocase</keyword>
<keyword id="KW-0813">Transport</keyword>
<evidence type="ECO:0000255" key="1">
    <source>
        <dbReference type="HAMAP-Rule" id="MF_01702"/>
    </source>
</evidence>
<dbReference type="EC" id="7.3.2.1" evidence="1"/>
<dbReference type="EMBL" id="AE005176">
    <property type="protein sequence ID" value="AAK05815.1"/>
    <property type="molecule type" value="Genomic_DNA"/>
</dbReference>
<dbReference type="PIR" id="E86839">
    <property type="entry name" value="E86839"/>
</dbReference>
<dbReference type="RefSeq" id="NP_267873.1">
    <property type="nucleotide sequence ID" value="NC_002662.1"/>
</dbReference>
<dbReference type="RefSeq" id="WP_003130885.1">
    <property type="nucleotide sequence ID" value="NC_002662.1"/>
</dbReference>
<dbReference type="SMR" id="Q9CEW7"/>
<dbReference type="PaxDb" id="272623-L155408"/>
<dbReference type="EnsemblBacteria" id="AAK05815">
    <property type="protein sequence ID" value="AAK05815"/>
    <property type="gene ID" value="L155408"/>
</dbReference>
<dbReference type="GeneID" id="89633918"/>
<dbReference type="KEGG" id="lla:L155408"/>
<dbReference type="PATRIC" id="fig|272623.7.peg.1841"/>
<dbReference type="eggNOG" id="COG1117">
    <property type="taxonomic scope" value="Bacteria"/>
</dbReference>
<dbReference type="HOGENOM" id="CLU_000604_1_22_9"/>
<dbReference type="OrthoDB" id="9802185at2"/>
<dbReference type="Proteomes" id="UP000002196">
    <property type="component" value="Chromosome"/>
</dbReference>
<dbReference type="GO" id="GO:0005886">
    <property type="term" value="C:plasma membrane"/>
    <property type="evidence" value="ECO:0007669"/>
    <property type="project" value="UniProtKB-SubCell"/>
</dbReference>
<dbReference type="GO" id="GO:0005524">
    <property type="term" value="F:ATP binding"/>
    <property type="evidence" value="ECO:0007669"/>
    <property type="project" value="UniProtKB-KW"/>
</dbReference>
<dbReference type="GO" id="GO:0016887">
    <property type="term" value="F:ATP hydrolysis activity"/>
    <property type="evidence" value="ECO:0007669"/>
    <property type="project" value="InterPro"/>
</dbReference>
<dbReference type="GO" id="GO:0015415">
    <property type="term" value="F:ATPase-coupled phosphate ion transmembrane transporter activity"/>
    <property type="evidence" value="ECO:0007669"/>
    <property type="project" value="UniProtKB-EC"/>
</dbReference>
<dbReference type="GO" id="GO:0035435">
    <property type="term" value="P:phosphate ion transmembrane transport"/>
    <property type="evidence" value="ECO:0007669"/>
    <property type="project" value="InterPro"/>
</dbReference>
<dbReference type="CDD" id="cd03260">
    <property type="entry name" value="ABC_PstB_phosphate_transporter"/>
    <property type="match status" value="1"/>
</dbReference>
<dbReference type="Gene3D" id="3.40.50.300">
    <property type="entry name" value="P-loop containing nucleotide triphosphate hydrolases"/>
    <property type="match status" value="1"/>
</dbReference>
<dbReference type="InterPro" id="IPR003593">
    <property type="entry name" value="AAA+_ATPase"/>
</dbReference>
<dbReference type="InterPro" id="IPR003439">
    <property type="entry name" value="ABC_transporter-like_ATP-bd"/>
</dbReference>
<dbReference type="InterPro" id="IPR017871">
    <property type="entry name" value="ABC_transporter-like_CS"/>
</dbReference>
<dbReference type="InterPro" id="IPR027417">
    <property type="entry name" value="P-loop_NTPase"/>
</dbReference>
<dbReference type="InterPro" id="IPR005670">
    <property type="entry name" value="PstB-like"/>
</dbReference>
<dbReference type="NCBIfam" id="TIGR00972">
    <property type="entry name" value="3a0107s01c2"/>
    <property type="match status" value="1"/>
</dbReference>
<dbReference type="PANTHER" id="PTHR43423">
    <property type="entry name" value="ABC TRANSPORTER I FAMILY MEMBER 17"/>
    <property type="match status" value="1"/>
</dbReference>
<dbReference type="PANTHER" id="PTHR43423:SF10">
    <property type="entry name" value="PHOSPHATE IMPORT ATP-BINDING PROTEIN PSTB 2"/>
    <property type="match status" value="1"/>
</dbReference>
<dbReference type="Pfam" id="PF00005">
    <property type="entry name" value="ABC_tran"/>
    <property type="match status" value="1"/>
</dbReference>
<dbReference type="SMART" id="SM00382">
    <property type="entry name" value="AAA"/>
    <property type="match status" value="1"/>
</dbReference>
<dbReference type="SUPFAM" id="SSF52540">
    <property type="entry name" value="P-loop containing nucleoside triphosphate hydrolases"/>
    <property type="match status" value="1"/>
</dbReference>
<dbReference type="PROSITE" id="PS00211">
    <property type="entry name" value="ABC_TRANSPORTER_1"/>
    <property type="match status" value="1"/>
</dbReference>
<dbReference type="PROSITE" id="PS50893">
    <property type="entry name" value="ABC_TRANSPORTER_2"/>
    <property type="match status" value="1"/>
</dbReference>
<dbReference type="PROSITE" id="PS51238">
    <property type="entry name" value="PSTB"/>
    <property type="match status" value="1"/>
</dbReference>
<protein>
    <recommendedName>
        <fullName evidence="1">Phosphate import ATP-binding protein PstB 2</fullName>
        <ecNumber evidence="1">7.3.2.1</ecNumber>
    </recommendedName>
    <alternativeName>
        <fullName evidence="1">ABC phosphate transporter 2</fullName>
    </alternativeName>
    <alternativeName>
        <fullName evidence="1">Phosphate-transporting ATPase 2</fullName>
    </alternativeName>
</protein>
<proteinExistence type="inferred from homology"/>
<sequence>MATTYDWSQRKIMVPEKEEIALSTNDLRVFYNGTKEAIHGVTMSFPKNEITALIGPSGSGKSTYLRALNRMNDTIDGARVTGEINYEGVNINENKVNVFEVRKQIGMVFQRPNPFPKSIYENIAFIHRRDGVRDRKKLDEIVETSLKQAALWDQVKDNLNQSALAMSGGQAQRLCIARALSVKPEIILMDEPASALDPISTMQIEETMMELKENYTIIIVTHNMAQASRASDNTAFFYSGDLIEYDKTSTIFTQPSLQSTEDYVSGHFG</sequence>
<reference key="1">
    <citation type="journal article" date="2001" name="Genome Res.">
        <title>The complete genome sequence of the lactic acid bacterium Lactococcus lactis ssp. lactis IL1403.</title>
        <authorList>
            <person name="Bolotin A."/>
            <person name="Wincker P."/>
            <person name="Mauger S."/>
            <person name="Jaillon O."/>
            <person name="Malarme K."/>
            <person name="Weissenbach J."/>
            <person name="Ehrlich S.D."/>
            <person name="Sorokin A."/>
        </authorList>
    </citation>
    <scope>NUCLEOTIDE SEQUENCE [LARGE SCALE GENOMIC DNA]</scope>
    <source>
        <strain>IL1403</strain>
    </source>
</reference>
<comment type="function">
    <text evidence="1">Part of the ABC transporter complex PstSACB involved in phosphate import. Responsible for energy coupling to the transport system.</text>
</comment>
<comment type="catalytic activity">
    <reaction evidence="1">
        <text>phosphate(out) + ATP + H2O = ADP + 2 phosphate(in) + H(+)</text>
        <dbReference type="Rhea" id="RHEA:24440"/>
        <dbReference type="ChEBI" id="CHEBI:15377"/>
        <dbReference type="ChEBI" id="CHEBI:15378"/>
        <dbReference type="ChEBI" id="CHEBI:30616"/>
        <dbReference type="ChEBI" id="CHEBI:43474"/>
        <dbReference type="ChEBI" id="CHEBI:456216"/>
        <dbReference type="EC" id="7.3.2.1"/>
    </reaction>
</comment>
<comment type="subunit">
    <text evidence="1">The complex is composed of two ATP-binding proteins (PstB), two transmembrane proteins (PstC and PstA) and a solute-binding protein (PstS).</text>
</comment>
<comment type="subcellular location">
    <subcellularLocation>
        <location evidence="1">Cell membrane</location>
        <topology evidence="1">Peripheral membrane protein</topology>
    </subcellularLocation>
</comment>
<comment type="similarity">
    <text evidence="1">Belongs to the ABC transporter superfamily. Phosphate importer (TC 3.A.1.7) family.</text>
</comment>
<organism>
    <name type="scientific">Lactococcus lactis subsp. lactis (strain IL1403)</name>
    <name type="common">Streptococcus lactis</name>
    <dbReference type="NCBI Taxonomy" id="272623"/>
    <lineage>
        <taxon>Bacteria</taxon>
        <taxon>Bacillati</taxon>
        <taxon>Bacillota</taxon>
        <taxon>Bacilli</taxon>
        <taxon>Lactobacillales</taxon>
        <taxon>Streptococcaceae</taxon>
        <taxon>Lactococcus</taxon>
    </lineage>
</organism>
<feature type="chain" id="PRO_0000092825" description="Phosphate import ATP-binding protein PstB 2">
    <location>
        <begin position="1"/>
        <end position="269"/>
    </location>
</feature>
<feature type="domain" description="ABC transporter" evidence="1">
    <location>
        <begin position="22"/>
        <end position="264"/>
    </location>
</feature>
<feature type="binding site" evidence="1">
    <location>
        <begin position="55"/>
        <end position="62"/>
    </location>
    <ligand>
        <name>ATP</name>
        <dbReference type="ChEBI" id="CHEBI:30616"/>
    </ligand>
</feature>